<sequence length="183" mass="21175">MGFSEWNLIWIDLEMTGLDPSRDRIIEIAVVVTDSNLDTLAEGPVLAIHQDRSLLDSMDEWNTRQHGRSGLTERVRASTVTEAEAEAQVLAFLKQYVPARTSPMCGNSICQDRRFLARWMPDLEAYFHYRHIDVSTLKELARRWSPEVAEGVRKSGNHLALDDIRDSIHELRHYRREFLRMPA</sequence>
<evidence type="ECO:0000255" key="1">
    <source>
        <dbReference type="HAMAP-Rule" id="MF_00045"/>
    </source>
</evidence>
<protein>
    <recommendedName>
        <fullName evidence="1">Oligoribonuclease</fullName>
        <ecNumber evidence="1">3.1.15.-</ecNumber>
    </recommendedName>
</protein>
<dbReference type="EC" id="3.1.15.-" evidence="1"/>
<dbReference type="EMBL" id="CP000544">
    <property type="protein sequence ID" value="ABM61019.1"/>
    <property type="molecule type" value="Genomic_DNA"/>
</dbReference>
<dbReference type="RefSeq" id="WP_011813042.1">
    <property type="nucleotide sequence ID" value="NC_008789.1"/>
</dbReference>
<dbReference type="SMR" id="A1WTK7"/>
<dbReference type="STRING" id="349124.Hhal_0225"/>
<dbReference type="KEGG" id="hha:Hhal_0225"/>
<dbReference type="eggNOG" id="COG1949">
    <property type="taxonomic scope" value="Bacteria"/>
</dbReference>
<dbReference type="HOGENOM" id="CLU_064761_2_0_6"/>
<dbReference type="OrthoDB" id="9801329at2"/>
<dbReference type="Proteomes" id="UP000000647">
    <property type="component" value="Chromosome"/>
</dbReference>
<dbReference type="GO" id="GO:0005737">
    <property type="term" value="C:cytoplasm"/>
    <property type="evidence" value="ECO:0007669"/>
    <property type="project" value="UniProtKB-SubCell"/>
</dbReference>
<dbReference type="GO" id="GO:0000175">
    <property type="term" value="F:3'-5'-RNA exonuclease activity"/>
    <property type="evidence" value="ECO:0007669"/>
    <property type="project" value="InterPro"/>
</dbReference>
<dbReference type="GO" id="GO:0003676">
    <property type="term" value="F:nucleic acid binding"/>
    <property type="evidence" value="ECO:0007669"/>
    <property type="project" value="InterPro"/>
</dbReference>
<dbReference type="GO" id="GO:0006259">
    <property type="term" value="P:DNA metabolic process"/>
    <property type="evidence" value="ECO:0007669"/>
    <property type="project" value="UniProtKB-ARBA"/>
</dbReference>
<dbReference type="CDD" id="cd06135">
    <property type="entry name" value="Orn"/>
    <property type="match status" value="1"/>
</dbReference>
<dbReference type="FunFam" id="3.30.420.10:FF:000003">
    <property type="entry name" value="Oligoribonuclease"/>
    <property type="match status" value="1"/>
</dbReference>
<dbReference type="Gene3D" id="3.30.420.10">
    <property type="entry name" value="Ribonuclease H-like superfamily/Ribonuclease H"/>
    <property type="match status" value="1"/>
</dbReference>
<dbReference type="HAMAP" id="MF_00045">
    <property type="entry name" value="Oligoribonuclease"/>
    <property type="match status" value="1"/>
</dbReference>
<dbReference type="InterPro" id="IPR013520">
    <property type="entry name" value="Exonuclease_RNaseT/DNA_pol3"/>
</dbReference>
<dbReference type="InterPro" id="IPR022894">
    <property type="entry name" value="Oligoribonuclease"/>
</dbReference>
<dbReference type="InterPro" id="IPR012337">
    <property type="entry name" value="RNaseH-like_sf"/>
</dbReference>
<dbReference type="InterPro" id="IPR036397">
    <property type="entry name" value="RNaseH_sf"/>
</dbReference>
<dbReference type="NCBIfam" id="NF003765">
    <property type="entry name" value="PRK05359.1"/>
    <property type="match status" value="1"/>
</dbReference>
<dbReference type="PANTHER" id="PTHR11046">
    <property type="entry name" value="OLIGORIBONUCLEASE, MITOCHONDRIAL"/>
    <property type="match status" value="1"/>
</dbReference>
<dbReference type="PANTHER" id="PTHR11046:SF0">
    <property type="entry name" value="OLIGORIBONUCLEASE, MITOCHONDRIAL"/>
    <property type="match status" value="1"/>
</dbReference>
<dbReference type="Pfam" id="PF00929">
    <property type="entry name" value="RNase_T"/>
    <property type="match status" value="1"/>
</dbReference>
<dbReference type="SMART" id="SM00479">
    <property type="entry name" value="EXOIII"/>
    <property type="match status" value="1"/>
</dbReference>
<dbReference type="SUPFAM" id="SSF53098">
    <property type="entry name" value="Ribonuclease H-like"/>
    <property type="match status" value="1"/>
</dbReference>
<name>ORN_HALHL</name>
<organism>
    <name type="scientific">Halorhodospira halophila (strain DSM 244 / SL1)</name>
    <name type="common">Ectothiorhodospira halophila (strain DSM 244 / SL1)</name>
    <dbReference type="NCBI Taxonomy" id="349124"/>
    <lineage>
        <taxon>Bacteria</taxon>
        <taxon>Pseudomonadati</taxon>
        <taxon>Pseudomonadota</taxon>
        <taxon>Gammaproteobacteria</taxon>
        <taxon>Chromatiales</taxon>
        <taxon>Ectothiorhodospiraceae</taxon>
        <taxon>Halorhodospira</taxon>
    </lineage>
</organism>
<feature type="chain" id="PRO_1000004256" description="Oligoribonuclease">
    <location>
        <begin position="1"/>
        <end position="183"/>
    </location>
</feature>
<feature type="domain" description="Exonuclease" evidence="1">
    <location>
        <begin position="8"/>
        <end position="171"/>
    </location>
</feature>
<feature type="active site" evidence="1">
    <location>
        <position position="129"/>
    </location>
</feature>
<accession>A1WTK7</accession>
<gene>
    <name evidence="1" type="primary">orn</name>
    <name type="ordered locus">Hhal_0225</name>
</gene>
<proteinExistence type="inferred from homology"/>
<comment type="function">
    <text evidence="1">3'-to-5' exoribonuclease specific for small oligoribonucleotides.</text>
</comment>
<comment type="subcellular location">
    <subcellularLocation>
        <location evidence="1">Cytoplasm</location>
    </subcellularLocation>
</comment>
<comment type="similarity">
    <text evidence="1">Belongs to the oligoribonuclease family.</text>
</comment>
<reference key="1">
    <citation type="submission" date="2006-12" db="EMBL/GenBank/DDBJ databases">
        <title>Complete sequence of Halorhodospira halophila SL1.</title>
        <authorList>
            <consortium name="US DOE Joint Genome Institute"/>
            <person name="Copeland A."/>
            <person name="Lucas S."/>
            <person name="Lapidus A."/>
            <person name="Barry K."/>
            <person name="Detter J.C."/>
            <person name="Glavina del Rio T."/>
            <person name="Hammon N."/>
            <person name="Israni S."/>
            <person name="Dalin E."/>
            <person name="Tice H."/>
            <person name="Pitluck S."/>
            <person name="Saunders E."/>
            <person name="Brettin T."/>
            <person name="Bruce D."/>
            <person name="Han C."/>
            <person name="Tapia R."/>
            <person name="Schmutz J."/>
            <person name="Larimer F."/>
            <person name="Land M."/>
            <person name="Hauser L."/>
            <person name="Kyrpides N."/>
            <person name="Mikhailova N."/>
            <person name="Hoff W."/>
            <person name="Richardson P."/>
        </authorList>
    </citation>
    <scope>NUCLEOTIDE SEQUENCE [LARGE SCALE GENOMIC DNA]</scope>
    <source>
        <strain>DSM 244 / SL1</strain>
    </source>
</reference>
<keyword id="KW-0963">Cytoplasm</keyword>
<keyword id="KW-0269">Exonuclease</keyword>
<keyword id="KW-0378">Hydrolase</keyword>
<keyword id="KW-0540">Nuclease</keyword>
<keyword id="KW-1185">Reference proteome</keyword>